<comment type="function">
    <text evidence="3 4">Component of the ubiquinol-cytochrome c oxidoreductase, a multisubunit transmembrane complex that is part of the mitochondrial electron transport chain which drives oxidative phosphorylation (PubMed:34525326, PubMed:36923588). Plays an important role in the uptake of multiple carbon sources such acetate, lactate, amino acids or GlcNAc present in different host niches (PubMed:36923588).</text>
</comment>
<comment type="subunit">
    <text evidence="3">Component of the ubiquinol-cytochrome c oxidoreductase (cytochrome b-c1 complex, complex III, CIII), a multisubunit enzyme composed of 10 subunits. The complex is composed of 3 respiratory subunits cytochrome b (COB), cytochrome c1 (CYT1) and Rieske protein (RIP1), 2 core protein subunits COR1 and QCR2, and 5 low-molecular weight protein subunits QCR6, QCR7, QCR8, QCR9 and QCR10. The complex exists as an obligatory dimer and forms supercomplexes (SCs) in the inner mitochondrial membrane with a monomer or a dimer of cytochrome c oxidase (complex IV, CIV), resulting in 2 different assemblies (supercomplexes III(2)IV and III(2)IV(2)).</text>
</comment>
<comment type="subcellular location">
    <subcellularLocation>
        <location evidence="1">Mitochondrion inner membrane</location>
        <topology evidence="1">Peripheral membrane protein</topology>
        <orientation evidence="1">Matrix side</orientation>
    </subcellularLocation>
</comment>
<comment type="induction">
    <text evidence="2">Expression is repressed by HAP43.</text>
</comment>
<comment type="disruption phenotype">
    <text evidence="4">Reduces recruitment of inflammatory cells and attenuates the virulence of C.albicans infection in vivo (PubMed:36923588). Leads to mitochondrial dysfunction and shows defects in biofilm formation or the maintenance of filamentous growth (PubMed:36923588). Leads to decreased vegetative growth on several carbon sources including maltose, citrate and acetate (PubMed:36923588).</text>
</comment>
<comment type="similarity">
    <text evidence="6">Belongs to the UQCRB/QCR7 family.</text>
</comment>
<reference key="1">
    <citation type="journal article" date="2004" name="Proc. Natl. Acad. Sci. U.S.A.">
        <title>The diploid genome sequence of Candida albicans.</title>
        <authorList>
            <person name="Jones T."/>
            <person name="Federspiel N.A."/>
            <person name="Chibana H."/>
            <person name="Dungan J."/>
            <person name="Kalman S."/>
            <person name="Magee B.B."/>
            <person name="Newport G."/>
            <person name="Thorstenson Y.R."/>
            <person name="Agabian N."/>
            <person name="Magee P.T."/>
            <person name="Davis R.W."/>
            <person name="Scherer S."/>
        </authorList>
    </citation>
    <scope>NUCLEOTIDE SEQUENCE [LARGE SCALE GENOMIC DNA]</scope>
    <source>
        <strain>SC5314 / ATCC MYA-2876</strain>
    </source>
</reference>
<reference key="2">
    <citation type="journal article" date="2007" name="Genome Biol.">
        <title>Assembly of the Candida albicans genome into sixteen supercontigs aligned on the eight chromosomes.</title>
        <authorList>
            <person name="van het Hoog M."/>
            <person name="Rast T.J."/>
            <person name="Martchenko M."/>
            <person name="Grindle S."/>
            <person name="Dignard D."/>
            <person name="Hogues H."/>
            <person name="Cuomo C."/>
            <person name="Berriman M."/>
            <person name="Scherer S."/>
            <person name="Magee B.B."/>
            <person name="Whiteway M."/>
            <person name="Chibana H."/>
            <person name="Nantel A."/>
            <person name="Magee P.T."/>
        </authorList>
    </citation>
    <scope>GENOME REANNOTATION</scope>
    <source>
        <strain>SC5314 / ATCC MYA-2876</strain>
    </source>
</reference>
<reference key="3">
    <citation type="journal article" date="2013" name="Genome Biol.">
        <title>Assembly of a phased diploid Candida albicans genome facilitates allele-specific measurements and provides a simple model for repeat and indel structure.</title>
        <authorList>
            <person name="Muzzey D."/>
            <person name="Schwartz K."/>
            <person name="Weissman J.S."/>
            <person name="Sherlock G."/>
        </authorList>
    </citation>
    <scope>NUCLEOTIDE SEQUENCE [LARGE SCALE GENOMIC DNA]</scope>
    <scope>GENOME REANNOTATION</scope>
    <source>
        <strain>SC5314 / ATCC MYA-2876</strain>
    </source>
</reference>
<reference key="4">
    <citation type="journal article" date="2011" name="J. Biol. Chem.">
        <title>Cap2-HAP complex is a critical transcriptional regulator that has dual but contrasting roles in regulation of iron homeostasis in Candida albicans.</title>
        <authorList>
            <person name="Singh R.P."/>
            <person name="Prasad H.K."/>
            <person name="Sinha I."/>
            <person name="Agarwal N."/>
            <person name="Natarajan K."/>
        </authorList>
    </citation>
    <scope>INDUCTION</scope>
</reference>
<reference key="5">
    <citation type="journal article" date="2023" name="Front. Cell. Infect. Microbiol.">
        <title>QCR7 affects the virulence of Candida albicans and the uptake of multiple carbon sources present in different host niches.</title>
        <authorList>
            <person name="Zeng L."/>
            <person name="Huang Y."/>
            <person name="Tan J."/>
            <person name="Peng J."/>
            <person name="Hu N."/>
            <person name="Liu Q."/>
            <person name="Cao Y."/>
            <person name="Zhang Y."/>
            <person name="Chen J."/>
            <person name="Huang X."/>
        </authorList>
    </citation>
    <scope>FUNCTION</scope>
    <scope>DISRUPTION PHENOTYPE</scope>
</reference>
<reference evidence="7 8 9 10 11" key="6">
    <citation type="journal article" date="2022" name="Structure">
        <title>Rieske head domain dynamics and indazole-derivative inhibition of Candida albicans complex III.</title>
        <authorList>
            <person name="Di Trani J.M."/>
            <person name="Liu Z."/>
            <person name="Whitesell L."/>
            <person name="Brzezinski P."/>
            <person name="Cowen L.E."/>
            <person name="Rubinstein J.L."/>
        </authorList>
    </citation>
    <scope>STRUCTURE BY ELECTRON MICROSCOPY (3.00 ANGSTROMS) OF THE HOMODIMERIC RESPIRATORY COMPLEX III</scope>
    <scope>FUNCTION</scope>
    <scope>SUBUNIT</scope>
</reference>
<sequence length="127" mass="14424">MVQSMTSVVKAANFILARPTLSKIITPLAQKFTAYAGYREMGLKFNDLLLEETPIMQTAIKRLPSELNYSRNFRILTAHQLALSHQLLPAEKAVKPEEDDNYLIPYILEAEKEAFEKAELDNIEVKA</sequence>
<gene>
    <name evidence="5" type="primary">QCR7</name>
    <name type="ordered locus">CAALFM_C603400CA</name>
    <name type="ordered locus">orf19.13074</name>
</gene>
<name>QCR7_CANAL</name>
<evidence type="ECO:0000250" key="1">
    <source>
        <dbReference type="UniProtKB" id="P00128"/>
    </source>
</evidence>
<evidence type="ECO:0000269" key="2">
    <source>
    </source>
</evidence>
<evidence type="ECO:0000269" key="3">
    <source>
    </source>
</evidence>
<evidence type="ECO:0000269" key="4">
    <source>
    </source>
</evidence>
<evidence type="ECO:0000303" key="5">
    <source>
    </source>
</evidence>
<evidence type="ECO:0000305" key="6"/>
<evidence type="ECO:0007744" key="7">
    <source>
        <dbReference type="PDB" id="7RJA"/>
    </source>
</evidence>
<evidence type="ECO:0007744" key="8">
    <source>
        <dbReference type="PDB" id="7RJB"/>
    </source>
</evidence>
<evidence type="ECO:0007744" key="9">
    <source>
        <dbReference type="PDB" id="7RJC"/>
    </source>
</evidence>
<evidence type="ECO:0007744" key="10">
    <source>
        <dbReference type="PDB" id="7RJD"/>
    </source>
</evidence>
<evidence type="ECO:0007744" key="11">
    <source>
        <dbReference type="PDB" id="7RJE"/>
    </source>
</evidence>
<evidence type="ECO:0007829" key="12">
    <source>
        <dbReference type="PDB" id="7RJA"/>
    </source>
</evidence>
<feature type="chain" id="PRO_0000459231" description="Cytochrome b-c1 complex subunit 7, mitochondrial">
    <location>
        <begin position="1"/>
        <end position="127"/>
    </location>
</feature>
<feature type="helix" evidence="12">
    <location>
        <begin position="5"/>
        <end position="17"/>
    </location>
</feature>
<feature type="helix" evidence="12">
    <location>
        <begin position="19"/>
        <end position="36"/>
    </location>
</feature>
<feature type="helix" evidence="12">
    <location>
        <begin position="39"/>
        <end position="41"/>
    </location>
</feature>
<feature type="helix" evidence="12">
    <location>
        <begin position="45"/>
        <end position="47"/>
    </location>
</feature>
<feature type="helix" evidence="12">
    <location>
        <begin position="54"/>
        <end position="61"/>
    </location>
</feature>
<feature type="helix" evidence="12">
    <location>
        <begin position="65"/>
        <end position="84"/>
    </location>
</feature>
<feature type="turn" evidence="12">
    <location>
        <begin position="90"/>
        <end position="92"/>
    </location>
</feature>
<feature type="turn" evidence="12">
    <location>
        <begin position="96"/>
        <end position="98"/>
    </location>
</feature>
<feature type="helix" evidence="12">
    <location>
        <begin position="104"/>
        <end position="121"/>
    </location>
</feature>
<organism>
    <name type="scientific">Candida albicans (strain SC5314 / ATCC MYA-2876)</name>
    <name type="common">Yeast</name>
    <dbReference type="NCBI Taxonomy" id="237561"/>
    <lineage>
        <taxon>Eukaryota</taxon>
        <taxon>Fungi</taxon>
        <taxon>Dikarya</taxon>
        <taxon>Ascomycota</taxon>
        <taxon>Saccharomycotina</taxon>
        <taxon>Pichiomycetes</taxon>
        <taxon>Debaryomycetaceae</taxon>
        <taxon>Candida/Lodderomyces clade</taxon>
        <taxon>Candida</taxon>
    </lineage>
</organism>
<keyword id="KW-0002">3D-structure</keyword>
<keyword id="KW-0249">Electron transport</keyword>
<keyword id="KW-0472">Membrane</keyword>
<keyword id="KW-0496">Mitochondrion</keyword>
<keyword id="KW-0999">Mitochondrion inner membrane</keyword>
<keyword id="KW-1185">Reference proteome</keyword>
<keyword id="KW-0679">Respiratory chain</keyword>
<keyword id="KW-0813">Transport</keyword>
<proteinExistence type="evidence at protein level"/>
<protein>
    <recommendedName>
        <fullName evidence="5">Cytochrome b-c1 complex subunit 7, mitochondrial</fullName>
    </recommendedName>
    <alternativeName>
        <fullName evidence="5">Complex III subunit 7</fullName>
    </alternativeName>
</protein>
<dbReference type="EMBL" id="CP017628">
    <property type="protein sequence ID" value="AOW30270.1"/>
    <property type="molecule type" value="Genomic_DNA"/>
</dbReference>
<dbReference type="RefSeq" id="XP_719189.1">
    <property type="nucleotide sequence ID" value="XM_714096.1"/>
</dbReference>
<dbReference type="PDB" id="7RJA">
    <property type="method" value="EM"/>
    <property type="resolution" value="3.00 A"/>
    <property type="chains" value="G/Q=1-127"/>
</dbReference>
<dbReference type="PDB" id="7RJB">
    <property type="method" value="EM"/>
    <property type="resolution" value="3.20 A"/>
    <property type="chains" value="G=1-127"/>
</dbReference>
<dbReference type="PDB" id="7RJC">
    <property type="method" value="EM"/>
    <property type="resolution" value="3.30 A"/>
    <property type="chains" value="G=1-127"/>
</dbReference>
<dbReference type="PDB" id="7RJD">
    <property type="method" value="EM"/>
    <property type="resolution" value="3.20 A"/>
    <property type="chains" value="G=1-127"/>
</dbReference>
<dbReference type="PDB" id="7RJE">
    <property type="method" value="EM"/>
    <property type="resolution" value="3.30 A"/>
    <property type="chains" value="G/P=1-127"/>
</dbReference>
<dbReference type="PDBsum" id="7RJA"/>
<dbReference type="PDBsum" id="7RJB"/>
<dbReference type="PDBsum" id="7RJC"/>
<dbReference type="PDBsum" id="7RJD"/>
<dbReference type="PDBsum" id="7RJE"/>
<dbReference type="EMDB" id="EMD-24482"/>
<dbReference type="EMDB" id="EMD-24483"/>
<dbReference type="EMDB" id="EMD-24484"/>
<dbReference type="EMDB" id="EMD-24485"/>
<dbReference type="EMDB" id="EMD-24486"/>
<dbReference type="SMR" id="Q5ABS1"/>
<dbReference type="FunCoup" id="Q5ABS1">
    <property type="interactions" value="225"/>
</dbReference>
<dbReference type="STRING" id="237561.Q5ABS1"/>
<dbReference type="EnsemblFungi" id="C6_03400C_A-T">
    <property type="protein sequence ID" value="C6_03400C_A-T-p1"/>
    <property type="gene ID" value="C6_03400C_A"/>
</dbReference>
<dbReference type="GeneID" id="3639233"/>
<dbReference type="KEGG" id="cal:CAALFM_C603400CA"/>
<dbReference type="CGD" id="CAL0000200050">
    <property type="gene designation" value="QCR7"/>
</dbReference>
<dbReference type="VEuPathDB" id="FungiDB:C6_03400C_A"/>
<dbReference type="eggNOG" id="KOG3440">
    <property type="taxonomic scope" value="Eukaryota"/>
</dbReference>
<dbReference type="HOGENOM" id="CLU_115154_1_0_1"/>
<dbReference type="InParanoid" id="Q5ABS1"/>
<dbReference type="OMA" id="PLAQWYT"/>
<dbReference type="OrthoDB" id="425749at2759"/>
<dbReference type="Proteomes" id="UP000000559">
    <property type="component" value="Chromosome 6"/>
</dbReference>
<dbReference type="GO" id="GO:0099617">
    <property type="term" value="C:matrix side of mitochondrial inner membrane"/>
    <property type="evidence" value="ECO:0007669"/>
    <property type="project" value="EnsemblFungi"/>
</dbReference>
<dbReference type="GO" id="GO:0005886">
    <property type="term" value="C:plasma membrane"/>
    <property type="evidence" value="ECO:0000314"/>
    <property type="project" value="CGD"/>
</dbReference>
<dbReference type="GO" id="GO:0045275">
    <property type="term" value="C:respiratory chain complex III"/>
    <property type="evidence" value="ECO:0000318"/>
    <property type="project" value="GO_Central"/>
</dbReference>
<dbReference type="GO" id="GO:0008121">
    <property type="term" value="F:ubiquinol-cytochrome-c reductase activity"/>
    <property type="evidence" value="ECO:0007669"/>
    <property type="project" value="EnsemblFungi"/>
</dbReference>
<dbReference type="GO" id="GO:0006122">
    <property type="term" value="P:mitochondrial electron transport, ubiquinol to cytochrome c"/>
    <property type="evidence" value="ECO:0000318"/>
    <property type="project" value="GO_Central"/>
</dbReference>
<dbReference type="GO" id="GO:0034551">
    <property type="term" value="P:mitochondrial respiratory chain complex III assembly"/>
    <property type="evidence" value="ECO:0007669"/>
    <property type="project" value="EnsemblFungi"/>
</dbReference>
<dbReference type="GO" id="GO:0010570">
    <property type="term" value="P:regulation of filamentous growth"/>
    <property type="evidence" value="ECO:0000315"/>
    <property type="project" value="CGD"/>
</dbReference>
<dbReference type="FunFam" id="1.10.1090.10:FF:000001">
    <property type="entry name" value="Cytochrome b-c1 complex subunit 7"/>
    <property type="match status" value="1"/>
</dbReference>
<dbReference type="Gene3D" id="1.10.1090.10">
    <property type="entry name" value="Cytochrome b-c1 complex subunit 7"/>
    <property type="match status" value="1"/>
</dbReference>
<dbReference type="InterPro" id="IPR003197">
    <property type="entry name" value="QCR7"/>
</dbReference>
<dbReference type="InterPro" id="IPR036544">
    <property type="entry name" value="QCR7_sf"/>
</dbReference>
<dbReference type="PANTHER" id="PTHR12022:SF0">
    <property type="entry name" value="CYTOCHROME B-C1 COMPLEX SUBUNIT 7"/>
    <property type="match status" value="1"/>
</dbReference>
<dbReference type="PANTHER" id="PTHR12022">
    <property type="entry name" value="UBIQUINOL-CYTOCHROME C REDUCTASE COMPLEX 14 KD PROTEIN"/>
    <property type="match status" value="1"/>
</dbReference>
<dbReference type="Pfam" id="PF02271">
    <property type="entry name" value="UCR_14kD"/>
    <property type="match status" value="1"/>
</dbReference>
<dbReference type="PIRSF" id="PIRSF000022">
    <property type="entry name" value="Bc1_14K"/>
    <property type="match status" value="1"/>
</dbReference>
<dbReference type="SUPFAM" id="SSF81524">
    <property type="entry name" value="14 kDa protein of cytochrome bc1 complex (Ubiquinol-cytochrome c reductase)"/>
    <property type="match status" value="1"/>
</dbReference>
<accession>Q5ABS1</accession>